<comment type="function">
    <text evidence="1">Produces ATP from ADP in the presence of a proton gradient across the membrane.</text>
</comment>
<comment type="similarity">
    <text evidence="1">Belongs to the V-ATPase E subunit family.</text>
</comment>
<protein>
    <recommendedName>
        <fullName>V-type ATP synthase subunit E</fullName>
    </recommendedName>
    <alternativeName>
        <fullName evidence="1">V-ATPase subunit E</fullName>
    </alternativeName>
</protein>
<proteinExistence type="inferred from homology"/>
<keyword id="KW-0066">ATP synthesis</keyword>
<keyword id="KW-0375">Hydrogen ion transport</keyword>
<keyword id="KW-0406">Ion transport</keyword>
<keyword id="KW-0813">Transport</keyword>
<feature type="chain" id="PRO_0000322511" description="V-type ATP synthase subunit E">
    <location>
        <begin position="1"/>
        <end position="199"/>
    </location>
</feature>
<evidence type="ECO:0000255" key="1">
    <source>
        <dbReference type="HAMAP-Rule" id="MF_00311"/>
    </source>
</evidence>
<dbReference type="EMBL" id="CP000726">
    <property type="protein sequence ID" value="ABS33601.1"/>
    <property type="molecule type" value="Genomic_DNA"/>
</dbReference>
<dbReference type="RefSeq" id="WP_011986936.1">
    <property type="nucleotide sequence ID" value="NC_009697.1"/>
</dbReference>
<dbReference type="SMR" id="A7FWR0"/>
<dbReference type="KEGG" id="cba:CLB_2570"/>
<dbReference type="HOGENOM" id="CLU_105846_0_0_9"/>
<dbReference type="GO" id="GO:0033178">
    <property type="term" value="C:proton-transporting two-sector ATPase complex, catalytic domain"/>
    <property type="evidence" value="ECO:0007669"/>
    <property type="project" value="InterPro"/>
</dbReference>
<dbReference type="GO" id="GO:0005524">
    <property type="term" value="F:ATP binding"/>
    <property type="evidence" value="ECO:0007669"/>
    <property type="project" value="UniProtKB-UniRule"/>
</dbReference>
<dbReference type="GO" id="GO:0046933">
    <property type="term" value="F:proton-transporting ATP synthase activity, rotational mechanism"/>
    <property type="evidence" value="ECO:0007669"/>
    <property type="project" value="UniProtKB-UniRule"/>
</dbReference>
<dbReference type="GO" id="GO:0046961">
    <property type="term" value="F:proton-transporting ATPase activity, rotational mechanism"/>
    <property type="evidence" value="ECO:0007669"/>
    <property type="project" value="InterPro"/>
</dbReference>
<dbReference type="GO" id="GO:0042777">
    <property type="term" value="P:proton motive force-driven plasma membrane ATP synthesis"/>
    <property type="evidence" value="ECO:0007669"/>
    <property type="project" value="UniProtKB-UniRule"/>
</dbReference>
<dbReference type="CDD" id="cd06503">
    <property type="entry name" value="ATP-synt_Fo_b"/>
    <property type="match status" value="1"/>
</dbReference>
<dbReference type="Gene3D" id="3.30.2320.30">
    <property type="entry name" value="ATP synthase, E subunit, C-terminal"/>
    <property type="match status" value="1"/>
</dbReference>
<dbReference type="Gene3D" id="1.20.5.620">
    <property type="entry name" value="F1F0 ATP synthase subunit B, membrane domain"/>
    <property type="match status" value="1"/>
</dbReference>
<dbReference type="HAMAP" id="MF_00311">
    <property type="entry name" value="ATP_synth_E_arch"/>
    <property type="match status" value="1"/>
</dbReference>
<dbReference type="InterPro" id="IPR038495">
    <property type="entry name" value="ATPase_E_C"/>
</dbReference>
<dbReference type="InterPro" id="IPR002842">
    <property type="entry name" value="ATPase_V1_Esu"/>
</dbReference>
<dbReference type="Pfam" id="PF01991">
    <property type="entry name" value="vATP-synt_E"/>
    <property type="match status" value="1"/>
</dbReference>
<dbReference type="SUPFAM" id="SSF160527">
    <property type="entry name" value="V-type ATPase subunit E-like"/>
    <property type="match status" value="1"/>
</dbReference>
<accession>A7FWR0</accession>
<sequence length="199" mass="22767">MSNLENLTSKIIEDANKEAEELLSEAKKEENKIVDEKVKKGNKAKEQIIEKSKREAKTKAERIISNTHLKIRNNKLEAKQEMINKVFDEAVIKLQNLSKDEYLDFVKSSILSLDIEGDEEIIISPNDKDKMDVNFMLTLNNKLKAKGKKGLLKISNENRNIKGGFILYKNGIEINNSFEALVDSLRDELEQEIIEALFS</sequence>
<gene>
    <name evidence="1" type="primary">atpE</name>
    <name type="ordered locus">CLB_2570</name>
</gene>
<organism>
    <name type="scientific">Clostridium botulinum (strain ATCC 19397 / Type A)</name>
    <dbReference type="NCBI Taxonomy" id="441770"/>
    <lineage>
        <taxon>Bacteria</taxon>
        <taxon>Bacillati</taxon>
        <taxon>Bacillota</taxon>
        <taxon>Clostridia</taxon>
        <taxon>Eubacteriales</taxon>
        <taxon>Clostridiaceae</taxon>
        <taxon>Clostridium</taxon>
    </lineage>
</organism>
<name>VATE_CLOB1</name>
<reference key="1">
    <citation type="journal article" date="2007" name="PLoS ONE">
        <title>Analysis of the neurotoxin complex genes in Clostridium botulinum A1-A4 and B1 strains: BoNT/A3, /Ba4 and /B1 clusters are located within plasmids.</title>
        <authorList>
            <person name="Smith T.J."/>
            <person name="Hill K.K."/>
            <person name="Foley B.T."/>
            <person name="Detter J.C."/>
            <person name="Munk A.C."/>
            <person name="Bruce D.C."/>
            <person name="Doggett N.A."/>
            <person name="Smith L.A."/>
            <person name="Marks J.D."/>
            <person name="Xie G."/>
            <person name="Brettin T.S."/>
        </authorList>
    </citation>
    <scope>NUCLEOTIDE SEQUENCE [LARGE SCALE GENOMIC DNA]</scope>
    <source>
        <strain>ATCC 19397 / Type A</strain>
    </source>
</reference>